<accession>A7FLC5</accession>
<feature type="chain" id="PRO_1000059332" description="Trigger factor">
    <location>
        <begin position="1"/>
        <end position="434"/>
    </location>
</feature>
<feature type="domain" description="PPIase FKBP-type" evidence="1">
    <location>
        <begin position="161"/>
        <end position="246"/>
    </location>
</feature>
<sequence length="434" mass="48241">MQVSVETTQGLGRRVTITVAADSIEKAVKSELVKAAKNVRIDGFRKGHVPMNIVEQRYGASVRQDVLGDLMQRNFVDAIIKEKINPAGAPNYVPGEYKQGEDFTYSVEFEVYPEVELKDLESIEVEKPVVEVNDADVDTMLETLRKQQATWKETDAAATAEDRATLDFTGSIDGEEFEGGKATDFVLAMGQGRMIPGFEEGVIGHKAGEEFTIDVNFPEDYHAENLKGKSAKFAIVLKKVEVRELPELTEEFIKRFGVADGSLAGLRAEVRKNMERELKGAVRNRVKTQAIDGLVSANNIDVPTALVDGEIDVLRRQAAQRFGGNEKQAAELPRELFEEQAKRRVVVGLLLGEVISQHELKADEDRVKALIEEMASAYEDPQEVIEFYSKNKELMNNMRNVALEEQAVETLLAKAKVTEKPTTFSELMNQTTAA</sequence>
<protein>
    <recommendedName>
        <fullName evidence="1">Trigger factor</fullName>
        <shortName evidence="1">TF</shortName>
        <ecNumber evidence="1">5.2.1.8</ecNumber>
    </recommendedName>
    <alternativeName>
        <fullName evidence="1">PPIase</fullName>
    </alternativeName>
</protein>
<evidence type="ECO:0000255" key="1">
    <source>
        <dbReference type="HAMAP-Rule" id="MF_00303"/>
    </source>
</evidence>
<comment type="function">
    <text evidence="1">Involved in protein export. Acts as a chaperone by maintaining the newly synthesized protein in an open conformation. Functions as a peptidyl-prolyl cis-trans isomerase.</text>
</comment>
<comment type="catalytic activity">
    <reaction evidence="1">
        <text>[protein]-peptidylproline (omega=180) = [protein]-peptidylproline (omega=0)</text>
        <dbReference type="Rhea" id="RHEA:16237"/>
        <dbReference type="Rhea" id="RHEA-COMP:10747"/>
        <dbReference type="Rhea" id="RHEA-COMP:10748"/>
        <dbReference type="ChEBI" id="CHEBI:83833"/>
        <dbReference type="ChEBI" id="CHEBI:83834"/>
        <dbReference type="EC" id="5.2.1.8"/>
    </reaction>
</comment>
<comment type="subcellular location">
    <subcellularLocation>
        <location>Cytoplasm</location>
    </subcellularLocation>
    <text evidence="1">About half TF is bound to the ribosome near the polypeptide exit tunnel while the other half is free in the cytoplasm.</text>
</comment>
<comment type="domain">
    <text evidence="1">Consists of 3 domains; the N-terminus binds the ribosome, the middle domain has PPIase activity, while the C-terminus has intrinsic chaperone activity on its own.</text>
</comment>
<comment type="similarity">
    <text evidence="1">Belongs to the FKBP-type PPIase family. Tig subfamily.</text>
</comment>
<proteinExistence type="inferred from homology"/>
<dbReference type="EC" id="5.2.1.8" evidence="1"/>
<dbReference type="EMBL" id="CP000720">
    <property type="protein sequence ID" value="ABS49642.1"/>
    <property type="molecule type" value="Genomic_DNA"/>
</dbReference>
<dbReference type="RefSeq" id="WP_002208643.1">
    <property type="nucleotide sequence ID" value="NC_009708.1"/>
</dbReference>
<dbReference type="SMR" id="A7FLC5"/>
<dbReference type="GeneID" id="57975553"/>
<dbReference type="KEGG" id="ypi:YpsIP31758_3093"/>
<dbReference type="HOGENOM" id="CLU_033058_2_0_6"/>
<dbReference type="Proteomes" id="UP000002412">
    <property type="component" value="Chromosome"/>
</dbReference>
<dbReference type="GO" id="GO:0005737">
    <property type="term" value="C:cytoplasm"/>
    <property type="evidence" value="ECO:0007669"/>
    <property type="project" value="UniProtKB-SubCell"/>
</dbReference>
<dbReference type="GO" id="GO:0003755">
    <property type="term" value="F:peptidyl-prolyl cis-trans isomerase activity"/>
    <property type="evidence" value="ECO:0007669"/>
    <property type="project" value="UniProtKB-UniRule"/>
</dbReference>
<dbReference type="GO" id="GO:0044183">
    <property type="term" value="F:protein folding chaperone"/>
    <property type="evidence" value="ECO:0007669"/>
    <property type="project" value="TreeGrafter"/>
</dbReference>
<dbReference type="GO" id="GO:0043022">
    <property type="term" value="F:ribosome binding"/>
    <property type="evidence" value="ECO:0007669"/>
    <property type="project" value="TreeGrafter"/>
</dbReference>
<dbReference type="GO" id="GO:0051083">
    <property type="term" value="P:'de novo' cotranslational protein folding"/>
    <property type="evidence" value="ECO:0007669"/>
    <property type="project" value="TreeGrafter"/>
</dbReference>
<dbReference type="GO" id="GO:0051301">
    <property type="term" value="P:cell division"/>
    <property type="evidence" value="ECO:0007669"/>
    <property type="project" value="UniProtKB-KW"/>
</dbReference>
<dbReference type="GO" id="GO:0061077">
    <property type="term" value="P:chaperone-mediated protein folding"/>
    <property type="evidence" value="ECO:0007669"/>
    <property type="project" value="TreeGrafter"/>
</dbReference>
<dbReference type="GO" id="GO:0015031">
    <property type="term" value="P:protein transport"/>
    <property type="evidence" value="ECO:0007669"/>
    <property type="project" value="UniProtKB-UniRule"/>
</dbReference>
<dbReference type="GO" id="GO:0043335">
    <property type="term" value="P:protein unfolding"/>
    <property type="evidence" value="ECO:0007669"/>
    <property type="project" value="TreeGrafter"/>
</dbReference>
<dbReference type="FunFam" id="1.10.3120.10:FF:000001">
    <property type="entry name" value="Trigger factor"/>
    <property type="match status" value="1"/>
</dbReference>
<dbReference type="FunFam" id="3.10.50.40:FF:000001">
    <property type="entry name" value="Trigger factor"/>
    <property type="match status" value="1"/>
</dbReference>
<dbReference type="FunFam" id="3.30.70.1050:FF:000001">
    <property type="entry name" value="Trigger factor"/>
    <property type="match status" value="1"/>
</dbReference>
<dbReference type="Gene3D" id="3.10.50.40">
    <property type="match status" value="1"/>
</dbReference>
<dbReference type="Gene3D" id="3.30.70.1050">
    <property type="entry name" value="Trigger factor ribosome-binding domain"/>
    <property type="match status" value="1"/>
</dbReference>
<dbReference type="Gene3D" id="1.10.3120.10">
    <property type="entry name" value="Trigger factor, C-terminal domain"/>
    <property type="match status" value="1"/>
</dbReference>
<dbReference type="HAMAP" id="MF_00303">
    <property type="entry name" value="Trigger_factor_Tig"/>
    <property type="match status" value="1"/>
</dbReference>
<dbReference type="InterPro" id="IPR046357">
    <property type="entry name" value="PPIase_dom_sf"/>
</dbReference>
<dbReference type="InterPro" id="IPR001179">
    <property type="entry name" value="PPIase_FKBP_dom"/>
</dbReference>
<dbReference type="InterPro" id="IPR005215">
    <property type="entry name" value="Trig_fac"/>
</dbReference>
<dbReference type="InterPro" id="IPR008880">
    <property type="entry name" value="Trigger_fac_C"/>
</dbReference>
<dbReference type="InterPro" id="IPR037041">
    <property type="entry name" value="Trigger_fac_C_sf"/>
</dbReference>
<dbReference type="InterPro" id="IPR008881">
    <property type="entry name" value="Trigger_fac_ribosome-bd_bac"/>
</dbReference>
<dbReference type="InterPro" id="IPR036611">
    <property type="entry name" value="Trigger_fac_ribosome-bd_sf"/>
</dbReference>
<dbReference type="InterPro" id="IPR027304">
    <property type="entry name" value="Trigger_fact/SurA_dom_sf"/>
</dbReference>
<dbReference type="NCBIfam" id="TIGR00115">
    <property type="entry name" value="tig"/>
    <property type="match status" value="1"/>
</dbReference>
<dbReference type="PANTHER" id="PTHR30560">
    <property type="entry name" value="TRIGGER FACTOR CHAPERONE AND PEPTIDYL-PROLYL CIS/TRANS ISOMERASE"/>
    <property type="match status" value="1"/>
</dbReference>
<dbReference type="PANTHER" id="PTHR30560:SF3">
    <property type="entry name" value="TRIGGER FACTOR-LIKE PROTEIN TIG, CHLOROPLASTIC"/>
    <property type="match status" value="1"/>
</dbReference>
<dbReference type="Pfam" id="PF00254">
    <property type="entry name" value="FKBP_C"/>
    <property type="match status" value="1"/>
</dbReference>
<dbReference type="Pfam" id="PF05698">
    <property type="entry name" value="Trigger_C"/>
    <property type="match status" value="1"/>
</dbReference>
<dbReference type="Pfam" id="PF05697">
    <property type="entry name" value="Trigger_N"/>
    <property type="match status" value="1"/>
</dbReference>
<dbReference type="PIRSF" id="PIRSF003095">
    <property type="entry name" value="Trigger_factor"/>
    <property type="match status" value="1"/>
</dbReference>
<dbReference type="SUPFAM" id="SSF54534">
    <property type="entry name" value="FKBP-like"/>
    <property type="match status" value="1"/>
</dbReference>
<dbReference type="SUPFAM" id="SSF109998">
    <property type="entry name" value="Triger factor/SurA peptide-binding domain-like"/>
    <property type="match status" value="1"/>
</dbReference>
<dbReference type="SUPFAM" id="SSF102735">
    <property type="entry name" value="Trigger factor ribosome-binding domain"/>
    <property type="match status" value="1"/>
</dbReference>
<dbReference type="PROSITE" id="PS50059">
    <property type="entry name" value="FKBP_PPIASE"/>
    <property type="match status" value="1"/>
</dbReference>
<gene>
    <name evidence="1" type="primary">tig</name>
    <name type="ordered locus">YpsIP31758_3093</name>
</gene>
<name>TIG_YERP3</name>
<reference key="1">
    <citation type="journal article" date="2007" name="PLoS Genet.">
        <title>The complete genome sequence of Yersinia pseudotuberculosis IP31758, the causative agent of Far East scarlet-like fever.</title>
        <authorList>
            <person name="Eppinger M."/>
            <person name="Rosovitz M.J."/>
            <person name="Fricke W.F."/>
            <person name="Rasko D.A."/>
            <person name="Kokorina G."/>
            <person name="Fayolle C."/>
            <person name="Lindler L.E."/>
            <person name="Carniel E."/>
            <person name="Ravel J."/>
        </authorList>
    </citation>
    <scope>NUCLEOTIDE SEQUENCE [LARGE SCALE GENOMIC DNA]</scope>
    <source>
        <strain>IP 31758</strain>
    </source>
</reference>
<keyword id="KW-0131">Cell cycle</keyword>
<keyword id="KW-0132">Cell division</keyword>
<keyword id="KW-0143">Chaperone</keyword>
<keyword id="KW-0963">Cytoplasm</keyword>
<keyword id="KW-0413">Isomerase</keyword>
<keyword id="KW-0697">Rotamase</keyword>
<organism>
    <name type="scientific">Yersinia pseudotuberculosis serotype O:1b (strain IP 31758)</name>
    <dbReference type="NCBI Taxonomy" id="349747"/>
    <lineage>
        <taxon>Bacteria</taxon>
        <taxon>Pseudomonadati</taxon>
        <taxon>Pseudomonadota</taxon>
        <taxon>Gammaproteobacteria</taxon>
        <taxon>Enterobacterales</taxon>
        <taxon>Yersiniaceae</taxon>
        <taxon>Yersinia</taxon>
    </lineage>
</organism>